<sequence>MQRRIMGIETEFGVTCTFHGHRRLSPDEVARYLFRRVVSWGRSSNVFLRNGARLYLDVGSHPEYATAECDNLIQLVTHDRAGERVLEDLLIDAEQRLADEGIGGDIYLFKNNTDSAGNSYGCHENYLIVRAGEFSRISDVLLPFLVTRQLICGAGKVLQTPKAATFCLSQRAEHIWEGVSSATTRSRPIINTRDEPHADAEKYRRLHVIVGDSNMCEATTMLKVGTASLVLEMIEAGVPFRDFSLDNPIRAIREVSHDLTGRRPVRLAGGRQASALDIQREYYSRAVEYLQSREPNTQIEQVVDLWGRQLDAVESQDFAKVDTEIDWVIKRKLFQRYQDRYNMELSDPKISQLDLAYHDIKRGRGVFDLLQRKGLAARITTDEEIDAAVTTPPQTTRAKLRGEFISAAQEAGRDFTVDWVHLKLNDQAQRTVLCKDPFRSVDERVKRLIASM</sequence>
<feature type="chain" id="PRO_0000395931" description="Pup--protein ligase">
    <location>
        <begin position="1"/>
        <end position="452"/>
    </location>
</feature>
<feature type="active site" description="Proton acceptor" evidence="1">
    <location>
        <position position="57"/>
    </location>
</feature>
<feature type="binding site" evidence="1">
    <location>
        <position position="9"/>
    </location>
    <ligand>
        <name>Mg(2+)</name>
        <dbReference type="ChEBI" id="CHEBI:18420"/>
    </ligand>
</feature>
<feature type="binding site" evidence="1">
    <location>
        <position position="53"/>
    </location>
    <ligand>
        <name>ATP</name>
        <dbReference type="ChEBI" id="CHEBI:30616"/>
    </ligand>
</feature>
<feature type="binding site" evidence="1">
    <location>
        <position position="55"/>
    </location>
    <ligand>
        <name>Mg(2+)</name>
        <dbReference type="ChEBI" id="CHEBI:18420"/>
    </ligand>
</feature>
<feature type="binding site" evidence="1">
    <location>
        <position position="63"/>
    </location>
    <ligand>
        <name>Mg(2+)</name>
        <dbReference type="ChEBI" id="CHEBI:18420"/>
    </ligand>
</feature>
<feature type="binding site" evidence="1">
    <location>
        <position position="66"/>
    </location>
    <ligand>
        <name>ATP</name>
        <dbReference type="ChEBI" id="CHEBI:30616"/>
    </ligand>
</feature>
<feature type="binding site" evidence="1">
    <location>
        <position position="419"/>
    </location>
    <ligand>
        <name>ATP</name>
        <dbReference type="ChEBI" id="CHEBI:30616"/>
    </ligand>
</feature>
<feature type="mutagenesis site" description="Loss of catalytic activity." evidence="2">
    <original>E</original>
    <variation>A</variation>
    <location>
        <position position="11"/>
    </location>
</feature>
<gene>
    <name type="primary">pafA</name>
    <name type="ordered locus">MSMEG_3890</name>
    <name type="ordered locus">MSMEI_3800</name>
</gene>
<organism>
    <name type="scientific">Mycolicibacterium smegmatis (strain ATCC 700084 / mc(2)155)</name>
    <name type="common">Mycobacterium smegmatis</name>
    <dbReference type="NCBI Taxonomy" id="246196"/>
    <lineage>
        <taxon>Bacteria</taxon>
        <taxon>Bacillati</taxon>
        <taxon>Actinomycetota</taxon>
        <taxon>Actinomycetes</taxon>
        <taxon>Mycobacteriales</taxon>
        <taxon>Mycobacteriaceae</taxon>
        <taxon>Mycolicibacterium</taxon>
    </lineage>
</organism>
<evidence type="ECO:0000250" key="1"/>
<evidence type="ECO:0000269" key="2">
    <source>
    </source>
</evidence>
<evidence type="ECO:0000269" key="3">
    <source>
    </source>
</evidence>
<evidence type="ECO:0000305" key="4"/>
<comment type="function">
    <text evidence="2">Catalyzes the covalent attachment of the prokaryotic ubiquitin-like protein modifier Pup to the proteasomal substrate proteins, thereby targeting them for proteasomal degradation. This tagging system is termed pupylation. The ligation reaction likely involves the side-chain carboxylate of the C-terminal glutamate of Pup and the side-chain amino group of a substrate lysine.</text>
</comment>
<comment type="catalytic activity">
    <reaction evidence="2">
        <text>ATP + [prokaryotic ubiquitin-like protein]-L-glutamate + [protein]-L-lysine = ADP + phosphate + N(6)-([prokaryotic ubiquitin-like protein]-gamma-L-glutamyl)-[protein]-L-lysine.</text>
        <dbReference type="EC" id="6.3.1.19"/>
    </reaction>
</comment>
<comment type="pathway">
    <text>Protein degradation; proteasomal Pup-dependent pathway.</text>
</comment>
<comment type="pathway">
    <text>Protein modification; protein pupylation.</text>
</comment>
<comment type="PTM">
    <text evidence="3">Pupylated at an undetermined lysine residue by the prokaryotic ubiquitin-like protein Pup, which leads to its degradation by the proteasome and thereby constitutes a negative auto-regulation.</text>
</comment>
<comment type="miscellaneous">
    <text evidence="1">The reaction mechanism probably proceeds via the activation of Pup by phosphorylation of its C-terminal glutamate, which is then subject to nucleophilic attack by the substrate lysine, resulting in an isopeptide bond and the release of phosphate as a good leaving group.</text>
</comment>
<comment type="similarity">
    <text evidence="4">Belongs to the Pup ligase/Pup deamidase family. Pup-conjugating enzyme subfamily.</text>
</comment>
<keyword id="KW-0067">ATP-binding</keyword>
<keyword id="KW-0436">Ligase</keyword>
<keyword id="KW-0460">Magnesium</keyword>
<keyword id="KW-0479">Metal-binding</keyword>
<keyword id="KW-0547">Nucleotide-binding</keyword>
<keyword id="KW-1185">Reference proteome</keyword>
<keyword id="KW-0832">Ubl conjugation</keyword>
<keyword id="KW-0833">Ubl conjugation pathway</keyword>
<name>PAFA_MYCS2</name>
<protein>
    <recommendedName>
        <fullName>Pup--protein ligase</fullName>
        <ecNumber evidence="2">6.3.1.19</ecNumber>
    </recommendedName>
    <alternativeName>
        <fullName>Proteasome accessory factor A</fullName>
    </alternativeName>
    <alternativeName>
        <fullName>Pup-conjugating enzyme</fullName>
    </alternativeName>
</protein>
<accession>A0QZ42</accession>
<accession>I7FNH9</accession>
<proteinExistence type="evidence at protein level"/>
<reference key="1">
    <citation type="submission" date="2006-10" db="EMBL/GenBank/DDBJ databases">
        <authorList>
            <person name="Fleischmann R.D."/>
            <person name="Dodson R.J."/>
            <person name="Haft D.H."/>
            <person name="Merkel J.S."/>
            <person name="Nelson W.C."/>
            <person name="Fraser C.M."/>
        </authorList>
    </citation>
    <scope>NUCLEOTIDE SEQUENCE [LARGE SCALE GENOMIC DNA]</scope>
    <source>
        <strain>ATCC 700084 / mc(2)155</strain>
    </source>
</reference>
<reference key="2">
    <citation type="journal article" date="2007" name="Genome Biol.">
        <title>Interrupted coding sequences in Mycobacterium smegmatis: authentic mutations or sequencing errors?</title>
        <authorList>
            <person name="Deshayes C."/>
            <person name="Perrodou E."/>
            <person name="Gallien S."/>
            <person name="Euphrasie D."/>
            <person name="Schaeffer C."/>
            <person name="Van-Dorsselaer A."/>
            <person name="Poch O."/>
            <person name="Lecompte O."/>
            <person name="Reyrat J.-M."/>
        </authorList>
    </citation>
    <scope>NUCLEOTIDE SEQUENCE [LARGE SCALE GENOMIC DNA]</scope>
    <source>
        <strain>ATCC 700084 / mc(2)155</strain>
    </source>
</reference>
<reference key="3">
    <citation type="journal article" date="2009" name="Genome Res.">
        <title>Ortho-proteogenomics: multiple proteomes investigation through orthology and a new MS-based protocol.</title>
        <authorList>
            <person name="Gallien S."/>
            <person name="Perrodou E."/>
            <person name="Carapito C."/>
            <person name="Deshayes C."/>
            <person name="Reyrat J.-M."/>
            <person name="Van Dorsselaer A."/>
            <person name="Poch O."/>
            <person name="Schaeffer C."/>
            <person name="Lecompte O."/>
        </authorList>
    </citation>
    <scope>NUCLEOTIDE SEQUENCE [LARGE SCALE GENOMIC DNA]</scope>
    <source>
        <strain>ATCC 700084 / mc(2)155</strain>
    </source>
</reference>
<reference key="4">
    <citation type="journal article" date="2010" name="Mol. Microbiol.">
        <title>Deletion of dop in Mycobacterium smegmatis abolishes pupylation of protein substrates in vivo.</title>
        <authorList>
            <person name="Imkamp F."/>
            <person name="Rosenberger T."/>
            <person name="Striebel F."/>
            <person name="Keller P.M."/>
            <person name="Amstutz B."/>
            <person name="Sander P."/>
            <person name="Weber-Ban E."/>
        </authorList>
    </citation>
    <scope>FUNCTION AS A PUP LIGASE</scope>
    <scope>CATALYTIC ACTIVITY</scope>
    <scope>MUTAGENESIS OF GLU-11</scope>
</reference>
<reference key="5">
    <citation type="journal article" date="2014" name="EMBO J.">
        <title>Survival of mycobacteria depends on proteasome-mediated amino acid recycling under nutrient limitation.</title>
        <authorList>
            <person name="Elharar Y."/>
            <person name="Roth Z."/>
            <person name="Hermelin I."/>
            <person name="Moon A."/>
            <person name="Peretz G."/>
            <person name="Shenkerman Y."/>
            <person name="Vishkautzan M."/>
            <person name="Khalaila I."/>
            <person name="Gur E."/>
        </authorList>
    </citation>
    <scope>PUPYLATION</scope>
    <source>
        <strain>ATCC 700084 / mc(2)155</strain>
    </source>
</reference>
<dbReference type="EC" id="6.3.1.19" evidence="2"/>
<dbReference type="EMBL" id="CP000480">
    <property type="protein sequence ID" value="ABK72318.1"/>
    <property type="molecule type" value="Genomic_DNA"/>
</dbReference>
<dbReference type="EMBL" id="CP001663">
    <property type="protein sequence ID" value="AFP40258.1"/>
    <property type="molecule type" value="Genomic_DNA"/>
</dbReference>
<dbReference type="RefSeq" id="WP_011729397.1">
    <property type="nucleotide sequence ID" value="NZ_SIJM01000005.1"/>
</dbReference>
<dbReference type="RefSeq" id="YP_888180.1">
    <property type="nucleotide sequence ID" value="NC_008596.1"/>
</dbReference>
<dbReference type="SMR" id="A0QZ42"/>
<dbReference type="STRING" id="246196.MSMEG_3890"/>
<dbReference type="PaxDb" id="246196-MSMEI_3800"/>
<dbReference type="GeneID" id="93458629"/>
<dbReference type="KEGG" id="msg:MSMEI_3800"/>
<dbReference type="KEGG" id="msm:MSMEG_3890"/>
<dbReference type="PATRIC" id="fig|246196.19.peg.3830"/>
<dbReference type="eggNOG" id="COG0638">
    <property type="taxonomic scope" value="Bacteria"/>
</dbReference>
<dbReference type="OrthoDB" id="9760627at2"/>
<dbReference type="BRENDA" id="6.3.1.19">
    <property type="organism ID" value="3512"/>
</dbReference>
<dbReference type="UniPathway" id="UPA00997"/>
<dbReference type="UniPathway" id="UPA00998"/>
<dbReference type="Proteomes" id="UP000000757">
    <property type="component" value="Chromosome"/>
</dbReference>
<dbReference type="Proteomes" id="UP000006158">
    <property type="component" value="Chromosome"/>
</dbReference>
<dbReference type="GO" id="GO:0005524">
    <property type="term" value="F:ATP binding"/>
    <property type="evidence" value="ECO:0007669"/>
    <property type="project" value="UniProtKB-UniRule"/>
</dbReference>
<dbReference type="GO" id="GO:0016879">
    <property type="term" value="F:ligase activity, forming carbon-nitrogen bonds"/>
    <property type="evidence" value="ECO:0007669"/>
    <property type="project" value="InterPro"/>
</dbReference>
<dbReference type="GO" id="GO:0000287">
    <property type="term" value="F:magnesium ion binding"/>
    <property type="evidence" value="ECO:0007669"/>
    <property type="project" value="UniProtKB-UniRule"/>
</dbReference>
<dbReference type="GO" id="GO:0019787">
    <property type="term" value="F:ubiquitin-like protein transferase activity"/>
    <property type="evidence" value="ECO:0007669"/>
    <property type="project" value="UniProtKB-UniRule"/>
</dbReference>
<dbReference type="GO" id="GO:0019941">
    <property type="term" value="P:modification-dependent protein catabolic process"/>
    <property type="evidence" value="ECO:0007669"/>
    <property type="project" value="UniProtKB-UniRule"/>
</dbReference>
<dbReference type="GO" id="GO:0010498">
    <property type="term" value="P:proteasomal protein catabolic process"/>
    <property type="evidence" value="ECO:0007669"/>
    <property type="project" value="UniProtKB-UniRule"/>
</dbReference>
<dbReference type="GO" id="GO:0070490">
    <property type="term" value="P:protein pupylation"/>
    <property type="evidence" value="ECO:0007669"/>
    <property type="project" value="UniProtKB-UniRule"/>
</dbReference>
<dbReference type="HAMAP" id="MF_02111">
    <property type="entry name" value="Pup_ligase"/>
    <property type="match status" value="1"/>
</dbReference>
<dbReference type="InterPro" id="IPR022279">
    <property type="entry name" value="Pup_ligase"/>
</dbReference>
<dbReference type="InterPro" id="IPR004347">
    <property type="entry name" value="Pup_ligase/deamidase"/>
</dbReference>
<dbReference type="NCBIfam" id="TIGR03686">
    <property type="entry name" value="pupylate_PafA"/>
    <property type="match status" value="1"/>
</dbReference>
<dbReference type="PANTHER" id="PTHR42307">
    <property type="entry name" value="PUP DEAMIDASE/DEPUPYLASE"/>
    <property type="match status" value="1"/>
</dbReference>
<dbReference type="PANTHER" id="PTHR42307:SF3">
    <property type="entry name" value="PUP--PROTEIN LIGASE"/>
    <property type="match status" value="1"/>
</dbReference>
<dbReference type="Pfam" id="PF03136">
    <property type="entry name" value="Pup_ligase"/>
    <property type="match status" value="1"/>
</dbReference>
<dbReference type="PIRSF" id="PIRSF018077">
    <property type="entry name" value="UCP018077"/>
    <property type="match status" value="1"/>
</dbReference>